<name>GLMM_LEIXX</name>
<reference key="1">
    <citation type="journal article" date="2004" name="Mol. Plant Microbe Interact.">
        <title>The genome sequence of the Gram-positive sugarcane pathogen Leifsonia xyli subsp. xyli.</title>
        <authorList>
            <person name="Monteiro-Vitorello C.B."/>
            <person name="Camargo L.E.A."/>
            <person name="Van Sluys M.A."/>
            <person name="Kitajima J.P."/>
            <person name="Truffi D."/>
            <person name="do Amaral A.M."/>
            <person name="Harakava R."/>
            <person name="de Oliveira J.C.F."/>
            <person name="Wood D."/>
            <person name="de Oliveira M.C."/>
            <person name="Miyaki C.Y."/>
            <person name="Takita M.A."/>
            <person name="da Silva A.C.R."/>
            <person name="Furlan L.R."/>
            <person name="Carraro D.M."/>
            <person name="Camarotte G."/>
            <person name="Almeida N.F. Jr."/>
            <person name="Carrer H."/>
            <person name="Coutinho L.L."/>
            <person name="El-Dorry H.A."/>
            <person name="Ferro M.I.T."/>
            <person name="Gagliardi P.R."/>
            <person name="Giglioti E."/>
            <person name="Goldman M.H.S."/>
            <person name="Goldman G.H."/>
            <person name="Kimura E.T."/>
            <person name="Ferro E.S."/>
            <person name="Kuramae E.E."/>
            <person name="Lemos E.G.M."/>
            <person name="Lemos M.V.F."/>
            <person name="Mauro S.M.Z."/>
            <person name="Machado M.A."/>
            <person name="Marino C.L."/>
            <person name="Menck C.F."/>
            <person name="Nunes L.R."/>
            <person name="Oliveira R.C."/>
            <person name="Pereira G.G."/>
            <person name="Siqueira W."/>
            <person name="de Souza A.A."/>
            <person name="Tsai S.M."/>
            <person name="Zanca A.S."/>
            <person name="Simpson A.J.G."/>
            <person name="Brumbley S.M."/>
            <person name="Setubal J.C."/>
        </authorList>
    </citation>
    <scope>NUCLEOTIDE SEQUENCE [LARGE SCALE GENOMIC DNA]</scope>
    <source>
        <strain>CTCB07</strain>
    </source>
</reference>
<dbReference type="EC" id="5.4.2.10" evidence="1"/>
<dbReference type="EMBL" id="AE016822">
    <property type="protein sequence ID" value="AAT89716.1"/>
    <property type="molecule type" value="Genomic_DNA"/>
</dbReference>
<dbReference type="RefSeq" id="WP_011186702.1">
    <property type="nucleotide sequence ID" value="NC_006087.1"/>
</dbReference>
<dbReference type="SMR" id="Q6AD28"/>
<dbReference type="STRING" id="281090.Lxx20010"/>
<dbReference type="KEGG" id="lxx:Lxx20010"/>
<dbReference type="eggNOG" id="COG1109">
    <property type="taxonomic scope" value="Bacteria"/>
</dbReference>
<dbReference type="HOGENOM" id="CLU_016950_7_0_11"/>
<dbReference type="Proteomes" id="UP000001306">
    <property type="component" value="Chromosome"/>
</dbReference>
<dbReference type="GO" id="GO:0005829">
    <property type="term" value="C:cytosol"/>
    <property type="evidence" value="ECO:0007669"/>
    <property type="project" value="TreeGrafter"/>
</dbReference>
<dbReference type="GO" id="GO:0000287">
    <property type="term" value="F:magnesium ion binding"/>
    <property type="evidence" value="ECO:0007669"/>
    <property type="project" value="UniProtKB-UniRule"/>
</dbReference>
<dbReference type="GO" id="GO:0008966">
    <property type="term" value="F:phosphoglucosamine mutase activity"/>
    <property type="evidence" value="ECO:0007669"/>
    <property type="project" value="UniProtKB-UniRule"/>
</dbReference>
<dbReference type="GO" id="GO:0004615">
    <property type="term" value="F:phosphomannomutase activity"/>
    <property type="evidence" value="ECO:0007669"/>
    <property type="project" value="TreeGrafter"/>
</dbReference>
<dbReference type="GO" id="GO:0005975">
    <property type="term" value="P:carbohydrate metabolic process"/>
    <property type="evidence" value="ECO:0007669"/>
    <property type="project" value="InterPro"/>
</dbReference>
<dbReference type="GO" id="GO:0009252">
    <property type="term" value="P:peptidoglycan biosynthetic process"/>
    <property type="evidence" value="ECO:0007669"/>
    <property type="project" value="TreeGrafter"/>
</dbReference>
<dbReference type="GO" id="GO:0006048">
    <property type="term" value="P:UDP-N-acetylglucosamine biosynthetic process"/>
    <property type="evidence" value="ECO:0007669"/>
    <property type="project" value="TreeGrafter"/>
</dbReference>
<dbReference type="CDD" id="cd05802">
    <property type="entry name" value="GlmM"/>
    <property type="match status" value="1"/>
</dbReference>
<dbReference type="FunFam" id="3.30.310.50:FF:000001">
    <property type="entry name" value="Phosphoglucosamine mutase"/>
    <property type="match status" value="1"/>
</dbReference>
<dbReference type="FunFam" id="3.40.120.10:FF:000001">
    <property type="entry name" value="Phosphoglucosamine mutase"/>
    <property type="match status" value="1"/>
</dbReference>
<dbReference type="FunFam" id="3.40.120.10:FF:000002">
    <property type="entry name" value="Phosphoglucosamine mutase"/>
    <property type="match status" value="1"/>
</dbReference>
<dbReference type="Gene3D" id="3.40.120.10">
    <property type="entry name" value="Alpha-D-Glucose-1,6-Bisphosphate, subunit A, domain 3"/>
    <property type="match status" value="3"/>
</dbReference>
<dbReference type="Gene3D" id="3.30.310.50">
    <property type="entry name" value="Alpha-D-phosphohexomutase, C-terminal domain"/>
    <property type="match status" value="1"/>
</dbReference>
<dbReference type="HAMAP" id="MF_01554_B">
    <property type="entry name" value="GlmM_B"/>
    <property type="match status" value="1"/>
</dbReference>
<dbReference type="InterPro" id="IPR005844">
    <property type="entry name" value="A-D-PHexomutase_a/b/a-I"/>
</dbReference>
<dbReference type="InterPro" id="IPR016055">
    <property type="entry name" value="A-D-PHexomutase_a/b/a-I/II/III"/>
</dbReference>
<dbReference type="InterPro" id="IPR005845">
    <property type="entry name" value="A-D-PHexomutase_a/b/a-II"/>
</dbReference>
<dbReference type="InterPro" id="IPR005846">
    <property type="entry name" value="A-D-PHexomutase_a/b/a-III"/>
</dbReference>
<dbReference type="InterPro" id="IPR005843">
    <property type="entry name" value="A-D-PHexomutase_C"/>
</dbReference>
<dbReference type="InterPro" id="IPR036900">
    <property type="entry name" value="A-D-PHexomutase_C_sf"/>
</dbReference>
<dbReference type="InterPro" id="IPR016066">
    <property type="entry name" value="A-D-PHexomutase_CS"/>
</dbReference>
<dbReference type="InterPro" id="IPR005841">
    <property type="entry name" value="Alpha-D-phosphohexomutase_SF"/>
</dbReference>
<dbReference type="InterPro" id="IPR006352">
    <property type="entry name" value="GlmM_bact"/>
</dbReference>
<dbReference type="InterPro" id="IPR050060">
    <property type="entry name" value="Phosphoglucosamine_mutase"/>
</dbReference>
<dbReference type="NCBIfam" id="TIGR01455">
    <property type="entry name" value="glmM"/>
    <property type="match status" value="1"/>
</dbReference>
<dbReference type="PANTHER" id="PTHR42946:SF1">
    <property type="entry name" value="PHOSPHOGLUCOMUTASE (ALPHA-D-GLUCOSE-1,6-BISPHOSPHATE-DEPENDENT)"/>
    <property type="match status" value="1"/>
</dbReference>
<dbReference type="PANTHER" id="PTHR42946">
    <property type="entry name" value="PHOSPHOHEXOSE MUTASE"/>
    <property type="match status" value="1"/>
</dbReference>
<dbReference type="Pfam" id="PF02878">
    <property type="entry name" value="PGM_PMM_I"/>
    <property type="match status" value="1"/>
</dbReference>
<dbReference type="Pfam" id="PF02879">
    <property type="entry name" value="PGM_PMM_II"/>
    <property type="match status" value="1"/>
</dbReference>
<dbReference type="Pfam" id="PF02880">
    <property type="entry name" value="PGM_PMM_III"/>
    <property type="match status" value="1"/>
</dbReference>
<dbReference type="Pfam" id="PF00408">
    <property type="entry name" value="PGM_PMM_IV"/>
    <property type="match status" value="1"/>
</dbReference>
<dbReference type="PRINTS" id="PR00509">
    <property type="entry name" value="PGMPMM"/>
</dbReference>
<dbReference type="SUPFAM" id="SSF55957">
    <property type="entry name" value="Phosphoglucomutase, C-terminal domain"/>
    <property type="match status" value="1"/>
</dbReference>
<dbReference type="SUPFAM" id="SSF53738">
    <property type="entry name" value="Phosphoglucomutase, first 3 domains"/>
    <property type="match status" value="3"/>
</dbReference>
<dbReference type="PROSITE" id="PS00710">
    <property type="entry name" value="PGM_PMM"/>
    <property type="match status" value="1"/>
</dbReference>
<sequence length="453" mass="47319">MPRLFGTDGVRGLANGTLTADLALGLAQAAAAVLTRGRSAEARRAVGKRPLAIVARDPRVSGEFLSAAVAAGLASSGIDVYDAGVIPTPAAAFLIADFDADFGVMVSASHNPAPDNGIKIFARGGTKLPDVVEDRIEEHLHLEKLTPTGAEVGRIQCFADAEDRYVLHLLASLPHRLDGIHVVLDCAHGAAAGISPEVFTDAGARVTVIGDAPDGMNINDGVGSTHLDRLAEAVLAAGADVGIAHDGDADRCLAIDASGRTVDGDQIMAILALGMKERGKLRDDTLVATVMSNLGLKLAMREAGVRVVETAVGDRYVLEEMNGHGYSLGGEQSGHVIMSDFATTGDGILTGLHLLSEMARQRKTLAELAQAMTVYPQVMVNVRGVDHHSVHSDELLRSAVEAVEAALGDSGRVLLRPSGTEPLVRVMVEAADQETAVRMANELADVVRERLAG</sequence>
<organism>
    <name type="scientific">Leifsonia xyli subsp. xyli (strain CTCB07)</name>
    <dbReference type="NCBI Taxonomy" id="281090"/>
    <lineage>
        <taxon>Bacteria</taxon>
        <taxon>Bacillati</taxon>
        <taxon>Actinomycetota</taxon>
        <taxon>Actinomycetes</taxon>
        <taxon>Micrococcales</taxon>
        <taxon>Microbacteriaceae</taxon>
        <taxon>Leifsonia</taxon>
    </lineage>
</organism>
<evidence type="ECO:0000255" key="1">
    <source>
        <dbReference type="HAMAP-Rule" id="MF_01554"/>
    </source>
</evidence>
<proteinExistence type="inferred from homology"/>
<protein>
    <recommendedName>
        <fullName evidence="1">Phosphoglucosamine mutase</fullName>
        <ecNumber evidence="1">5.4.2.10</ecNumber>
    </recommendedName>
</protein>
<gene>
    <name evidence="1" type="primary">glmM</name>
    <name type="ordered locus">Lxx20010</name>
</gene>
<keyword id="KW-0413">Isomerase</keyword>
<keyword id="KW-0460">Magnesium</keyword>
<keyword id="KW-0479">Metal-binding</keyword>
<keyword id="KW-0597">Phosphoprotein</keyword>
<keyword id="KW-1185">Reference proteome</keyword>
<comment type="function">
    <text evidence="1">Catalyzes the conversion of glucosamine-6-phosphate to glucosamine-1-phosphate.</text>
</comment>
<comment type="catalytic activity">
    <reaction evidence="1">
        <text>alpha-D-glucosamine 1-phosphate = D-glucosamine 6-phosphate</text>
        <dbReference type="Rhea" id="RHEA:23424"/>
        <dbReference type="ChEBI" id="CHEBI:58516"/>
        <dbReference type="ChEBI" id="CHEBI:58725"/>
        <dbReference type="EC" id="5.4.2.10"/>
    </reaction>
</comment>
<comment type="cofactor">
    <cofactor evidence="1">
        <name>Mg(2+)</name>
        <dbReference type="ChEBI" id="CHEBI:18420"/>
    </cofactor>
    <text evidence="1">Binds 1 Mg(2+) ion per subunit.</text>
</comment>
<comment type="PTM">
    <text evidence="1">Activated by phosphorylation.</text>
</comment>
<comment type="similarity">
    <text evidence="1">Belongs to the phosphohexose mutase family.</text>
</comment>
<feature type="chain" id="PRO_0000147909" description="Phosphoglucosamine mutase">
    <location>
        <begin position="1"/>
        <end position="453"/>
    </location>
</feature>
<feature type="active site" description="Phosphoserine intermediate" evidence="1">
    <location>
        <position position="109"/>
    </location>
</feature>
<feature type="binding site" description="via phosphate group" evidence="1">
    <location>
        <position position="109"/>
    </location>
    <ligand>
        <name>Mg(2+)</name>
        <dbReference type="ChEBI" id="CHEBI:18420"/>
    </ligand>
</feature>
<feature type="binding site" evidence="1">
    <location>
        <position position="246"/>
    </location>
    <ligand>
        <name>Mg(2+)</name>
        <dbReference type="ChEBI" id="CHEBI:18420"/>
    </ligand>
</feature>
<feature type="binding site" evidence="1">
    <location>
        <position position="248"/>
    </location>
    <ligand>
        <name>Mg(2+)</name>
        <dbReference type="ChEBI" id="CHEBI:18420"/>
    </ligand>
</feature>
<feature type="binding site" evidence="1">
    <location>
        <position position="250"/>
    </location>
    <ligand>
        <name>Mg(2+)</name>
        <dbReference type="ChEBI" id="CHEBI:18420"/>
    </ligand>
</feature>
<feature type="modified residue" description="Phosphoserine" evidence="1">
    <location>
        <position position="109"/>
    </location>
</feature>
<accession>Q6AD28</accession>